<feature type="initiator methionine" description="Removed" evidence="3">
    <location>
        <position position="1"/>
    </location>
</feature>
<feature type="chain" id="PRO_0000407351" description="Ras-related protein RABA5d">
    <location>
        <begin position="2"/>
        <end position="219"/>
    </location>
</feature>
<feature type="short sequence motif" description="Effector region" evidence="1">
    <location>
        <begin position="41"/>
        <end position="49"/>
    </location>
</feature>
<feature type="binding site" evidence="1">
    <location>
        <begin position="19"/>
        <end position="26"/>
    </location>
    <ligand>
        <name>GTP</name>
        <dbReference type="ChEBI" id="CHEBI:37565"/>
    </ligand>
</feature>
<feature type="binding site" evidence="1">
    <location>
        <begin position="67"/>
        <end position="71"/>
    </location>
    <ligand>
        <name>GTP</name>
        <dbReference type="ChEBI" id="CHEBI:37565"/>
    </ligand>
</feature>
<feature type="binding site" evidence="1">
    <location>
        <begin position="125"/>
        <end position="128"/>
    </location>
    <ligand>
        <name>GTP</name>
        <dbReference type="ChEBI" id="CHEBI:37565"/>
    </ligand>
</feature>
<feature type="binding site" evidence="1">
    <location>
        <begin position="155"/>
        <end position="156"/>
    </location>
    <ligand>
        <name>GTP</name>
        <dbReference type="ChEBI" id="CHEBI:37565"/>
    </ligand>
</feature>
<feature type="modified residue" description="N-acetylserine" evidence="3">
    <location>
        <position position="2"/>
    </location>
</feature>
<feature type="lipid moiety-binding region" description="S-geranylgeranyl cysteine" evidence="1">
    <location>
        <position position="215"/>
    </location>
</feature>
<feature type="lipid moiety-binding region" description="S-geranylgeranyl cysteine" evidence="1">
    <location>
        <position position="216"/>
    </location>
</feature>
<feature type="sequence conflict" description="In Ref. 5; AAM62720." evidence="2" ref="5">
    <original>FQ</original>
    <variation>LE</variation>
    <location>
        <begin position="49"/>
        <end position="50"/>
    </location>
</feature>
<feature type="sequence conflict" description="In Ref. 5; AAM62720." evidence="2" ref="5">
    <original>G</original>
    <variation>C</variation>
    <location>
        <position position="70"/>
    </location>
</feature>
<proteinExistence type="evidence at protein level"/>
<organism>
    <name type="scientific">Arabidopsis thaliana</name>
    <name type="common">Mouse-ear cress</name>
    <dbReference type="NCBI Taxonomy" id="3702"/>
    <lineage>
        <taxon>Eukaryota</taxon>
        <taxon>Viridiplantae</taxon>
        <taxon>Streptophyta</taxon>
        <taxon>Embryophyta</taxon>
        <taxon>Tracheophyta</taxon>
        <taxon>Spermatophyta</taxon>
        <taxon>Magnoliopsida</taxon>
        <taxon>eudicotyledons</taxon>
        <taxon>Gunneridae</taxon>
        <taxon>Pentapetalae</taxon>
        <taxon>rosids</taxon>
        <taxon>malvids</taxon>
        <taxon>Brassicales</taxon>
        <taxon>Brassicaceae</taxon>
        <taxon>Camelineae</taxon>
        <taxon>Arabidopsis</taxon>
    </lineage>
</organism>
<keyword id="KW-0007">Acetylation</keyword>
<keyword id="KW-1003">Cell membrane</keyword>
<keyword id="KW-0342">GTP-binding</keyword>
<keyword id="KW-0449">Lipoprotein</keyword>
<keyword id="KW-0472">Membrane</keyword>
<keyword id="KW-0547">Nucleotide-binding</keyword>
<keyword id="KW-0636">Prenylation</keyword>
<keyword id="KW-0653">Protein transport</keyword>
<keyword id="KW-1185">Reference proteome</keyword>
<keyword id="KW-0813">Transport</keyword>
<dbReference type="EMBL" id="AC007071">
    <property type="protein sequence ID" value="AAD24853.1"/>
    <property type="molecule type" value="Genomic_DNA"/>
</dbReference>
<dbReference type="EMBL" id="CP002685">
    <property type="protein sequence ID" value="AEC08572.1"/>
    <property type="molecule type" value="Genomic_DNA"/>
</dbReference>
<dbReference type="EMBL" id="BT009720">
    <property type="protein sequence ID" value="AAP88354.1"/>
    <property type="molecule type" value="mRNA"/>
</dbReference>
<dbReference type="EMBL" id="AK227705">
    <property type="protein sequence ID" value="BAE99691.1"/>
    <property type="molecule type" value="mRNA"/>
</dbReference>
<dbReference type="EMBL" id="AY085494">
    <property type="protein sequence ID" value="AAM62720.1"/>
    <property type="molecule type" value="mRNA"/>
</dbReference>
<dbReference type="PIR" id="G84723">
    <property type="entry name" value="G84723"/>
</dbReference>
<dbReference type="RefSeq" id="NP_180726.1">
    <property type="nucleotide sequence ID" value="NM_128725.3"/>
</dbReference>
<dbReference type="SMR" id="Q9SIP0"/>
<dbReference type="FunCoup" id="Q9SIP0">
    <property type="interactions" value="318"/>
</dbReference>
<dbReference type="STRING" id="3702.Q9SIP0"/>
<dbReference type="iPTMnet" id="Q9SIP0"/>
<dbReference type="PaxDb" id="3702-AT2G31680.1"/>
<dbReference type="ProteomicsDB" id="236558"/>
<dbReference type="EnsemblPlants" id="AT2G31680.1">
    <property type="protein sequence ID" value="AT2G31680.1"/>
    <property type="gene ID" value="AT2G31680"/>
</dbReference>
<dbReference type="GeneID" id="817724"/>
<dbReference type="Gramene" id="AT2G31680.1">
    <property type="protein sequence ID" value="AT2G31680.1"/>
    <property type="gene ID" value="AT2G31680"/>
</dbReference>
<dbReference type="KEGG" id="ath:AT2G31680"/>
<dbReference type="Araport" id="AT2G31680"/>
<dbReference type="TAIR" id="AT2G31680">
    <property type="gene designation" value="RABA5D"/>
</dbReference>
<dbReference type="eggNOG" id="KOG0087">
    <property type="taxonomic scope" value="Eukaryota"/>
</dbReference>
<dbReference type="HOGENOM" id="CLU_041217_23_0_1"/>
<dbReference type="InParanoid" id="Q9SIP0"/>
<dbReference type="OMA" id="EMLFFET"/>
<dbReference type="OrthoDB" id="9989112at2759"/>
<dbReference type="PhylomeDB" id="Q9SIP0"/>
<dbReference type="PRO" id="PR:Q9SIP0"/>
<dbReference type="Proteomes" id="UP000006548">
    <property type="component" value="Chromosome 2"/>
</dbReference>
<dbReference type="ExpressionAtlas" id="Q9SIP0">
    <property type="expression patterns" value="baseline and differential"/>
</dbReference>
<dbReference type="GO" id="GO:0005777">
    <property type="term" value="C:peroxisome"/>
    <property type="evidence" value="ECO:0007005"/>
    <property type="project" value="TAIR"/>
</dbReference>
<dbReference type="GO" id="GO:0005886">
    <property type="term" value="C:plasma membrane"/>
    <property type="evidence" value="ECO:0007669"/>
    <property type="project" value="UniProtKB-SubCell"/>
</dbReference>
<dbReference type="GO" id="GO:0005525">
    <property type="term" value="F:GTP binding"/>
    <property type="evidence" value="ECO:0007669"/>
    <property type="project" value="UniProtKB-KW"/>
</dbReference>
<dbReference type="GO" id="GO:0003924">
    <property type="term" value="F:GTPase activity"/>
    <property type="evidence" value="ECO:0007669"/>
    <property type="project" value="InterPro"/>
</dbReference>
<dbReference type="GO" id="GO:0015031">
    <property type="term" value="P:protein transport"/>
    <property type="evidence" value="ECO:0007669"/>
    <property type="project" value="UniProtKB-KW"/>
</dbReference>
<dbReference type="CDD" id="cd01868">
    <property type="entry name" value="Rab11_like"/>
    <property type="match status" value="1"/>
</dbReference>
<dbReference type="FunFam" id="3.40.50.300:FF:000274">
    <property type="entry name" value="ras-related protein RABA5a"/>
    <property type="match status" value="1"/>
</dbReference>
<dbReference type="Gene3D" id="3.40.50.300">
    <property type="entry name" value="P-loop containing nucleotide triphosphate hydrolases"/>
    <property type="match status" value="1"/>
</dbReference>
<dbReference type="InterPro" id="IPR027417">
    <property type="entry name" value="P-loop_NTPase"/>
</dbReference>
<dbReference type="InterPro" id="IPR050209">
    <property type="entry name" value="Rab_GTPases_membrane_traffic"/>
</dbReference>
<dbReference type="InterPro" id="IPR005225">
    <property type="entry name" value="Small_GTP-bd"/>
</dbReference>
<dbReference type="InterPro" id="IPR001806">
    <property type="entry name" value="Small_GTPase"/>
</dbReference>
<dbReference type="NCBIfam" id="TIGR00231">
    <property type="entry name" value="small_GTP"/>
    <property type="match status" value="1"/>
</dbReference>
<dbReference type="PANTHER" id="PTHR47979">
    <property type="entry name" value="DRAB11-RELATED"/>
    <property type="match status" value="1"/>
</dbReference>
<dbReference type="Pfam" id="PF00071">
    <property type="entry name" value="Ras"/>
    <property type="match status" value="1"/>
</dbReference>
<dbReference type="PRINTS" id="PR00449">
    <property type="entry name" value="RASTRNSFRMNG"/>
</dbReference>
<dbReference type="SMART" id="SM00175">
    <property type="entry name" value="RAB"/>
    <property type="match status" value="1"/>
</dbReference>
<dbReference type="SMART" id="SM00176">
    <property type="entry name" value="RAN"/>
    <property type="match status" value="1"/>
</dbReference>
<dbReference type="SMART" id="SM00173">
    <property type="entry name" value="RAS"/>
    <property type="match status" value="1"/>
</dbReference>
<dbReference type="SMART" id="SM00174">
    <property type="entry name" value="RHO"/>
    <property type="match status" value="1"/>
</dbReference>
<dbReference type="SUPFAM" id="SSF52540">
    <property type="entry name" value="P-loop containing nucleoside triphosphate hydrolases"/>
    <property type="match status" value="1"/>
</dbReference>
<dbReference type="PROSITE" id="PS51419">
    <property type="entry name" value="RAB"/>
    <property type="match status" value="1"/>
</dbReference>
<evidence type="ECO:0000250" key="1"/>
<evidence type="ECO:0000305" key="2"/>
<evidence type="ECO:0007744" key="3">
    <source>
    </source>
</evidence>
<reference key="1">
    <citation type="journal article" date="1999" name="Nature">
        <title>Sequence and analysis of chromosome 2 of the plant Arabidopsis thaliana.</title>
        <authorList>
            <person name="Lin X."/>
            <person name="Kaul S."/>
            <person name="Rounsley S.D."/>
            <person name="Shea T.P."/>
            <person name="Benito M.-I."/>
            <person name="Town C.D."/>
            <person name="Fujii C.Y."/>
            <person name="Mason T.M."/>
            <person name="Bowman C.L."/>
            <person name="Barnstead M.E."/>
            <person name="Feldblyum T.V."/>
            <person name="Buell C.R."/>
            <person name="Ketchum K.A."/>
            <person name="Lee J.J."/>
            <person name="Ronning C.M."/>
            <person name="Koo H.L."/>
            <person name="Moffat K.S."/>
            <person name="Cronin L.A."/>
            <person name="Shen M."/>
            <person name="Pai G."/>
            <person name="Van Aken S."/>
            <person name="Umayam L."/>
            <person name="Tallon L.J."/>
            <person name="Gill J.E."/>
            <person name="Adams M.D."/>
            <person name="Carrera A.J."/>
            <person name="Creasy T.H."/>
            <person name="Goodman H.M."/>
            <person name="Somerville C.R."/>
            <person name="Copenhaver G.P."/>
            <person name="Preuss D."/>
            <person name="Nierman W.C."/>
            <person name="White O."/>
            <person name="Eisen J.A."/>
            <person name="Salzberg S.L."/>
            <person name="Fraser C.M."/>
            <person name="Venter J.C."/>
        </authorList>
    </citation>
    <scope>NUCLEOTIDE SEQUENCE [LARGE SCALE GENOMIC DNA]</scope>
    <source>
        <strain>cv. Columbia</strain>
    </source>
</reference>
<reference key="2">
    <citation type="journal article" date="2017" name="Plant J.">
        <title>Araport11: a complete reannotation of the Arabidopsis thaliana reference genome.</title>
        <authorList>
            <person name="Cheng C.Y."/>
            <person name="Krishnakumar V."/>
            <person name="Chan A.P."/>
            <person name="Thibaud-Nissen F."/>
            <person name="Schobel S."/>
            <person name="Town C.D."/>
        </authorList>
    </citation>
    <scope>GENOME REANNOTATION</scope>
    <source>
        <strain>cv. Columbia</strain>
    </source>
</reference>
<reference key="3">
    <citation type="journal article" date="2003" name="Science">
        <title>Empirical analysis of transcriptional activity in the Arabidopsis genome.</title>
        <authorList>
            <person name="Yamada K."/>
            <person name="Lim J."/>
            <person name="Dale J.M."/>
            <person name="Chen H."/>
            <person name="Shinn P."/>
            <person name="Palm C.J."/>
            <person name="Southwick A.M."/>
            <person name="Wu H.C."/>
            <person name="Kim C.J."/>
            <person name="Nguyen M."/>
            <person name="Pham P.K."/>
            <person name="Cheuk R.F."/>
            <person name="Karlin-Newmann G."/>
            <person name="Liu S.X."/>
            <person name="Lam B."/>
            <person name="Sakano H."/>
            <person name="Wu T."/>
            <person name="Yu G."/>
            <person name="Miranda M."/>
            <person name="Quach H.L."/>
            <person name="Tripp M."/>
            <person name="Chang C.H."/>
            <person name="Lee J.M."/>
            <person name="Toriumi M.J."/>
            <person name="Chan M.M."/>
            <person name="Tang C.C."/>
            <person name="Onodera C.S."/>
            <person name="Deng J.M."/>
            <person name="Akiyama K."/>
            <person name="Ansari Y."/>
            <person name="Arakawa T."/>
            <person name="Banh J."/>
            <person name="Banno F."/>
            <person name="Bowser L."/>
            <person name="Brooks S.Y."/>
            <person name="Carninci P."/>
            <person name="Chao Q."/>
            <person name="Choy N."/>
            <person name="Enju A."/>
            <person name="Goldsmith A.D."/>
            <person name="Gurjal M."/>
            <person name="Hansen N.F."/>
            <person name="Hayashizaki Y."/>
            <person name="Johnson-Hopson C."/>
            <person name="Hsuan V.W."/>
            <person name="Iida K."/>
            <person name="Karnes M."/>
            <person name="Khan S."/>
            <person name="Koesema E."/>
            <person name="Ishida J."/>
            <person name="Jiang P.X."/>
            <person name="Jones T."/>
            <person name="Kawai J."/>
            <person name="Kamiya A."/>
            <person name="Meyers C."/>
            <person name="Nakajima M."/>
            <person name="Narusaka M."/>
            <person name="Seki M."/>
            <person name="Sakurai T."/>
            <person name="Satou M."/>
            <person name="Tamse R."/>
            <person name="Vaysberg M."/>
            <person name="Wallender E.K."/>
            <person name="Wong C."/>
            <person name="Yamamura Y."/>
            <person name="Yuan S."/>
            <person name="Shinozaki K."/>
            <person name="Davis R.W."/>
            <person name="Theologis A."/>
            <person name="Ecker J.R."/>
        </authorList>
    </citation>
    <scope>NUCLEOTIDE SEQUENCE [LARGE SCALE MRNA]</scope>
    <source>
        <strain>cv. Columbia</strain>
    </source>
</reference>
<reference key="4">
    <citation type="submission" date="2006-07" db="EMBL/GenBank/DDBJ databases">
        <title>Large-scale analysis of RIKEN Arabidopsis full-length (RAFL) cDNAs.</title>
        <authorList>
            <person name="Totoki Y."/>
            <person name="Seki M."/>
            <person name="Ishida J."/>
            <person name="Nakajima M."/>
            <person name="Enju A."/>
            <person name="Kamiya A."/>
            <person name="Narusaka M."/>
            <person name="Shin-i T."/>
            <person name="Nakagawa M."/>
            <person name="Sakamoto N."/>
            <person name="Oishi K."/>
            <person name="Kohara Y."/>
            <person name="Kobayashi M."/>
            <person name="Toyoda A."/>
            <person name="Sakaki Y."/>
            <person name="Sakurai T."/>
            <person name="Iida K."/>
            <person name="Akiyama K."/>
            <person name="Satou M."/>
            <person name="Toyoda T."/>
            <person name="Konagaya A."/>
            <person name="Carninci P."/>
            <person name="Kawai J."/>
            <person name="Hayashizaki Y."/>
            <person name="Shinozaki K."/>
        </authorList>
    </citation>
    <scope>NUCLEOTIDE SEQUENCE [LARGE SCALE MRNA]</scope>
    <source>
        <strain>cv. Columbia</strain>
    </source>
</reference>
<reference key="5">
    <citation type="submission" date="2002-03" db="EMBL/GenBank/DDBJ databases">
        <title>Full-length cDNA from Arabidopsis thaliana.</title>
        <authorList>
            <person name="Brover V.V."/>
            <person name="Troukhan M.E."/>
            <person name="Alexandrov N.A."/>
            <person name="Lu Y.-P."/>
            <person name="Flavell R.B."/>
            <person name="Feldmann K.A."/>
        </authorList>
    </citation>
    <scope>NUCLEOTIDE SEQUENCE [LARGE SCALE MRNA]</scope>
</reference>
<reference key="6">
    <citation type="journal article" date="2003" name="Plant Physiol.">
        <title>Analysis of the small GTPase gene superfamily of Arabidopsis.</title>
        <authorList>
            <person name="Vernoud V."/>
            <person name="Horton A.C."/>
            <person name="Yang Z."/>
            <person name="Nielsen E."/>
        </authorList>
    </citation>
    <scope>GENE FAMILY</scope>
    <scope>NOMENCLATURE</scope>
</reference>
<reference key="7">
    <citation type="journal article" date="2012" name="Mol. Cell. Proteomics">
        <title>Comparative large-scale characterisation of plant vs. mammal proteins reveals similar and idiosyncratic N-alpha acetylation features.</title>
        <authorList>
            <person name="Bienvenut W.V."/>
            <person name="Sumpton D."/>
            <person name="Martinez A."/>
            <person name="Lilla S."/>
            <person name="Espagne C."/>
            <person name="Meinnel T."/>
            <person name="Giglione C."/>
        </authorList>
    </citation>
    <scope>ACETYLATION [LARGE SCALE ANALYSIS] AT SER-2</scope>
    <scope>CLEAVAGE OF INITIATOR METHIONINE [LARGE SCALE ANALYSIS]</scope>
    <scope>IDENTIFICATION BY MASS SPECTROMETRY [LARGE SCALE ANALYSIS]</scope>
</reference>
<comment type="function">
    <text evidence="1">Intracellular vesicle trafficking and protein transport.</text>
</comment>
<comment type="subcellular location">
    <subcellularLocation>
        <location evidence="2">Cell membrane</location>
        <topology evidence="2">Lipid-anchor</topology>
        <orientation evidence="2">Cytoplasmic side</orientation>
    </subcellularLocation>
</comment>
<comment type="similarity">
    <text evidence="2">Belongs to the small GTPase superfamily. Rab family.</text>
</comment>
<gene>
    <name type="primary">RABA5D</name>
    <name type="ordered locus">At2g31680</name>
    <name type="ORF">T9H9.20</name>
</gene>
<protein>
    <recommendedName>
        <fullName>Ras-related protein RABA5d</fullName>
        <shortName>AtRABA5d</shortName>
    </recommendedName>
</protein>
<accession>Q9SIP0</accession>
<accession>Q8LEC5</accession>
<sequence length="219" mass="24361">MSSDDEGGEEYLFKIVIIGDSAVGKSNLLSRYARNEFNAHSKATIGVEFQTQNMEIEGKEVKAQIWDTAGQERFRAVTSAYYRGAVGALVVYDISRRSTFESVGRWLDELKTHSDTTVARMLVGNKCDLESIRAVSVEEGKALAETEGLFFMETSALDSTNVKTAFEMVIRDIYTNISRKQLNSDTYKTELSMKNRVSLVKDDNKSSTQGFGFSCCSSS</sequence>
<name>RAA5D_ARATH</name>